<proteinExistence type="inferred from homology"/>
<dbReference type="EC" id="2.4.99.28" evidence="1"/>
<dbReference type="EMBL" id="AM406670">
    <property type="protein sequence ID" value="CAL93323.1"/>
    <property type="molecule type" value="Genomic_DNA"/>
</dbReference>
<dbReference type="RefSeq" id="WP_011764441.1">
    <property type="nucleotide sequence ID" value="NC_008702.1"/>
</dbReference>
<dbReference type="SMR" id="A1K3B8"/>
<dbReference type="STRING" id="62928.azo0706"/>
<dbReference type="CAZy" id="GT51">
    <property type="family name" value="Glycosyltransferase Family 51"/>
</dbReference>
<dbReference type="KEGG" id="azo:azo0706"/>
<dbReference type="eggNOG" id="COG0744">
    <property type="taxonomic scope" value="Bacteria"/>
</dbReference>
<dbReference type="HOGENOM" id="CLU_006354_1_0_4"/>
<dbReference type="UniPathway" id="UPA00219"/>
<dbReference type="Proteomes" id="UP000002588">
    <property type="component" value="Chromosome"/>
</dbReference>
<dbReference type="GO" id="GO:0009274">
    <property type="term" value="C:peptidoglycan-based cell wall"/>
    <property type="evidence" value="ECO:0007669"/>
    <property type="project" value="InterPro"/>
</dbReference>
<dbReference type="GO" id="GO:0005886">
    <property type="term" value="C:plasma membrane"/>
    <property type="evidence" value="ECO:0007669"/>
    <property type="project" value="UniProtKB-SubCell"/>
</dbReference>
<dbReference type="GO" id="GO:0016763">
    <property type="term" value="F:pentosyltransferase activity"/>
    <property type="evidence" value="ECO:0007669"/>
    <property type="project" value="InterPro"/>
</dbReference>
<dbReference type="GO" id="GO:0008955">
    <property type="term" value="F:peptidoglycan glycosyltransferase activity"/>
    <property type="evidence" value="ECO:0007669"/>
    <property type="project" value="UniProtKB-UniRule"/>
</dbReference>
<dbReference type="GO" id="GO:0071555">
    <property type="term" value="P:cell wall organization"/>
    <property type="evidence" value="ECO:0007669"/>
    <property type="project" value="UniProtKB-KW"/>
</dbReference>
<dbReference type="GO" id="GO:0009252">
    <property type="term" value="P:peptidoglycan biosynthetic process"/>
    <property type="evidence" value="ECO:0007669"/>
    <property type="project" value="UniProtKB-UniRule"/>
</dbReference>
<dbReference type="GO" id="GO:0008360">
    <property type="term" value="P:regulation of cell shape"/>
    <property type="evidence" value="ECO:0007669"/>
    <property type="project" value="UniProtKB-KW"/>
</dbReference>
<dbReference type="Gene3D" id="1.10.3810.10">
    <property type="entry name" value="Biosynthetic peptidoglycan transglycosylase-like"/>
    <property type="match status" value="1"/>
</dbReference>
<dbReference type="HAMAP" id="MF_00766">
    <property type="entry name" value="PGT_MtgA"/>
    <property type="match status" value="1"/>
</dbReference>
<dbReference type="InterPro" id="IPR001264">
    <property type="entry name" value="Glyco_trans_51"/>
</dbReference>
<dbReference type="InterPro" id="IPR023346">
    <property type="entry name" value="Lysozyme-like_dom_sf"/>
</dbReference>
<dbReference type="InterPro" id="IPR036950">
    <property type="entry name" value="PBP_transglycosylase"/>
</dbReference>
<dbReference type="InterPro" id="IPR011812">
    <property type="entry name" value="Pep_trsgly"/>
</dbReference>
<dbReference type="NCBIfam" id="TIGR02070">
    <property type="entry name" value="mono_pep_trsgly"/>
    <property type="match status" value="1"/>
</dbReference>
<dbReference type="PANTHER" id="PTHR30400:SF0">
    <property type="entry name" value="BIOSYNTHETIC PEPTIDOGLYCAN TRANSGLYCOSYLASE"/>
    <property type="match status" value="1"/>
</dbReference>
<dbReference type="PANTHER" id="PTHR30400">
    <property type="entry name" value="MONOFUNCTIONAL BIOSYNTHETIC PEPTIDOGLYCAN TRANSGLYCOSYLASE"/>
    <property type="match status" value="1"/>
</dbReference>
<dbReference type="Pfam" id="PF00912">
    <property type="entry name" value="Transgly"/>
    <property type="match status" value="1"/>
</dbReference>
<dbReference type="SUPFAM" id="SSF53955">
    <property type="entry name" value="Lysozyme-like"/>
    <property type="match status" value="1"/>
</dbReference>
<protein>
    <recommendedName>
        <fullName evidence="1">Biosynthetic peptidoglycan transglycosylase</fullName>
        <ecNumber evidence="1">2.4.99.28</ecNumber>
    </recommendedName>
    <alternativeName>
        <fullName evidence="1">Glycan polymerase</fullName>
    </alternativeName>
    <alternativeName>
        <fullName evidence="1">Peptidoglycan glycosyltransferase MtgA</fullName>
        <shortName evidence="1">PGT</shortName>
    </alternativeName>
</protein>
<organism>
    <name type="scientific">Azoarcus sp. (strain BH72)</name>
    <dbReference type="NCBI Taxonomy" id="418699"/>
    <lineage>
        <taxon>Bacteria</taxon>
        <taxon>Pseudomonadati</taxon>
        <taxon>Pseudomonadota</taxon>
        <taxon>Betaproteobacteria</taxon>
        <taxon>Rhodocyclales</taxon>
        <taxon>Zoogloeaceae</taxon>
        <taxon>Azoarcus</taxon>
    </lineage>
</organism>
<name>MTGA_AZOSB</name>
<keyword id="KW-0997">Cell inner membrane</keyword>
<keyword id="KW-1003">Cell membrane</keyword>
<keyword id="KW-0133">Cell shape</keyword>
<keyword id="KW-0961">Cell wall biogenesis/degradation</keyword>
<keyword id="KW-0328">Glycosyltransferase</keyword>
<keyword id="KW-0472">Membrane</keyword>
<keyword id="KW-0573">Peptidoglycan synthesis</keyword>
<keyword id="KW-1185">Reference proteome</keyword>
<keyword id="KW-0808">Transferase</keyword>
<keyword id="KW-0812">Transmembrane</keyword>
<keyword id="KW-1133">Transmembrane helix</keyword>
<reference key="1">
    <citation type="journal article" date="2006" name="Nat. Biotechnol.">
        <title>Complete genome of the mutualistic, N2-fixing grass endophyte Azoarcus sp. strain BH72.</title>
        <authorList>
            <person name="Krause A."/>
            <person name="Ramakumar A."/>
            <person name="Bartels D."/>
            <person name="Battistoni F."/>
            <person name="Bekel T."/>
            <person name="Boch J."/>
            <person name="Boehm M."/>
            <person name="Friedrich F."/>
            <person name="Hurek T."/>
            <person name="Krause L."/>
            <person name="Linke B."/>
            <person name="McHardy A.C."/>
            <person name="Sarkar A."/>
            <person name="Schneiker S."/>
            <person name="Syed A.A."/>
            <person name="Thauer R."/>
            <person name="Vorhoelter F.-J."/>
            <person name="Weidner S."/>
            <person name="Puehler A."/>
            <person name="Reinhold-Hurek B."/>
            <person name="Kaiser O."/>
            <person name="Goesmann A."/>
        </authorList>
    </citation>
    <scope>NUCLEOTIDE SEQUENCE [LARGE SCALE GENOMIC DNA]</scope>
    <source>
        <strain>BH72</strain>
    </source>
</reference>
<feature type="chain" id="PRO_1000017299" description="Biosynthetic peptidoglycan transglycosylase">
    <location>
        <begin position="1"/>
        <end position="231"/>
    </location>
</feature>
<feature type="transmembrane region" description="Helical" evidence="1">
    <location>
        <begin position="12"/>
        <end position="32"/>
    </location>
</feature>
<evidence type="ECO:0000255" key="1">
    <source>
        <dbReference type="HAMAP-Rule" id="MF_00766"/>
    </source>
</evidence>
<accession>A1K3B8</accession>
<sequence>MKTLWRWLGRALLAAFALLLLWQVWLFAQVAWWRTHNPDSTSFMRLRLDALQEKKPDARLRHTWVPYEQISIHLKRAVVAAEDDGFVDHEGFDWDGIQRALEKNERKGRPVSGGSTISQQLAKNLFLSPSRSYFRKAQEAVITVMIEQLWSKRRILEVYLNVVEWGNGIFGAEAAARRYYGLPASRLGPAEAARLAVMLPNPRKYERSFGPRLAAHADRIRGRMAWAEVPP</sequence>
<comment type="function">
    <text evidence="1">Peptidoglycan polymerase that catalyzes glycan chain elongation from lipid-linked precursors.</text>
</comment>
<comment type="catalytic activity">
    <reaction evidence="1">
        <text>[GlcNAc-(1-&gt;4)-Mur2Ac(oyl-L-Ala-gamma-D-Glu-L-Lys-D-Ala-D-Ala)](n)-di-trans,octa-cis-undecaprenyl diphosphate + beta-D-GlcNAc-(1-&gt;4)-Mur2Ac(oyl-L-Ala-gamma-D-Glu-L-Lys-D-Ala-D-Ala)-di-trans,octa-cis-undecaprenyl diphosphate = [GlcNAc-(1-&gt;4)-Mur2Ac(oyl-L-Ala-gamma-D-Glu-L-Lys-D-Ala-D-Ala)](n+1)-di-trans,octa-cis-undecaprenyl diphosphate + di-trans,octa-cis-undecaprenyl diphosphate + H(+)</text>
        <dbReference type="Rhea" id="RHEA:23708"/>
        <dbReference type="Rhea" id="RHEA-COMP:9602"/>
        <dbReference type="Rhea" id="RHEA-COMP:9603"/>
        <dbReference type="ChEBI" id="CHEBI:15378"/>
        <dbReference type="ChEBI" id="CHEBI:58405"/>
        <dbReference type="ChEBI" id="CHEBI:60033"/>
        <dbReference type="ChEBI" id="CHEBI:78435"/>
        <dbReference type="EC" id="2.4.99.28"/>
    </reaction>
</comment>
<comment type="pathway">
    <text evidence="1">Cell wall biogenesis; peptidoglycan biosynthesis.</text>
</comment>
<comment type="subcellular location">
    <subcellularLocation>
        <location evidence="1">Cell inner membrane</location>
        <topology evidence="1">Single-pass membrane protein</topology>
    </subcellularLocation>
</comment>
<comment type="similarity">
    <text evidence="1">Belongs to the glycosyltransferase 51 family.</text>
</comment>
<gene>
    <name evidence="1" type="primary">mtgA</name>
    <name type="ordered locus">azo0706</name>
</gene>